<protein>
    <recommendedName>
        <fullName>Histone H1.11L</fullName>
    </recommendedName>
</protein>
<reference key="1">
    <citation type="journal article" date="1987" name="J. Biol. Chem.">
        <title>Characterization of the chicken histone H1 gene complement. Generation of a complete set of vertebrate H1 protein sequences.</title>
        <authorList>
            <person name="Coles L.S."/>
            <person name="Robins A.J."/>
            <person name="Madley L.K."/>
            <person name="Wells J.R.E."/>
        </authorList>
    </citation>
    <scope>NUCLEOTIDE SEQUENCE [GENOMIC DNA]</scope>
</reference>
<reference key="2">
    <citation type="journal article" date="1993" name="Biochemistry">
        <title>Homo- and heteronuclear two-dimensional NMR studies of the globular domain of histone H1: sequential assignment and secondary structure.</title>
        <authorList>
            <person name="Cerf C."/>
            <person name="Lippens G."/>
            <person name="Muyldermans S."/>
            <person name="Segers A."/>
            <person name="Ramakrishnan V."/>
            <person name="Wodak S.J."/>
            <person name="Hallenga K."/>
            <person name="Wyns L."/>
        </authorList>
    </citation>
    <scope>STRUCTURE BY NMR OF 41-114</scope>
</reference>
<evidence type="ECO:0000250" key="1"/>
<evidence type="ECO:0000255" key="2">
    <source>
        <dbReference type="PROSITE-ProRule" id="PRU00837"/>
    </source>
</evidence>
<evidence type="ECO:0000256" key="3">
    <source>
        <dbReference type="SAM" id="MobiDB-lite"/>
    </source>
</evidence>
<evidence type="ECO:0007829" key="4">
    <source>
        <dbReference type="PDB" id="1GHC"/>
    </source>
</evidence>
<organism>
    <name type="scientific">Gallus gallus</name>
    <name type="common">Chicken</name>
    <dbReference type="NCBI Taxonomy" id="9031"/>
    <lineage>
        <taxon>Eukaryota</taxon>
        <taxon>Metazoa</taxon>
        <taxon>Chordata</taxon>
        <taxon>Craniata</taxon>
        <taxon>Vertebrata</taxon>
        <taxon>Euteleostomi</taxon>
        <taxon>Archelosauria</taxon>
        <taxon>Archosauria</taxon>
        <taxon>Dinosauria</taxon>
        <taxon>Saurischia</taxon>
        <taxon>Theropoda</taxon>
        <taxon>Coelurosauria</taxon>
        <taxon>Aves</taxon>
        <taxon>Neognathae</taxon>
        <taxon>Galloanserae</taxon>
        <taxon>Galliformes</taxon>
        <taxon>Phasianidae</taxon>
        <taxon>Phasianinae</taxon>
        <taxon>Gallus</taxon>
    </lineage>
</organism>
<keyword id="KW-0002">3D-structure</keyword>
<keyword id="KW-0007">Acetylation</keyword>
<keyword id="KW-0158">Chromosome</keyword>
<keyword id="KW-0238">DNA-binding</keyword>
<keyword id="KW-0539">Nucleus</keyword>
<keyword id="KW-1185">Reference proteome</keyword>
<name>H11L_CHICK</name>
<sequence>MSETAPAPAAEAAPAAAPAPAKAAAKKPKKAAGGAKARKPAGPSVTELITKAVSASKERKGLSLAALKKALAAGGYDVEKNNSRIKLGLKSLVSKGTLVQTKGTGASGSFRLSKKPGEVKEKAPKKKASAAKPKKPAAKKPAAAAKKPKKAVAVKKSPKKAKKPAASATKKSAKSPKKVTKAVKPKKAVAAKSPAKAKAVKPKAAKPKAAKPKAAKAKKAAAKKK</sequence>
<accession>P08287</accession>
<proteinExistence type="evidence at protein level"/>
<feature type="initiator methionine" description="Removed">
    <location>
        <position position="1"/>
    </location>
</feature>
<feature type="chain" id="PRO_0000195931" description="Histone H1.11L">
    <location>
        <begin position="2"/>
        <end position="225"/>
    </location>
</feature>
<feature type="domain" description="H15" evidence="2">
    <location>
        <begin position="41"/>
        <end position="114"/>
    </location>
</feature>
<feature type="region of interest" description="Disordered" evidence="3">
    <location>
        <begin position="1"/>
        <end position="46"/>
    </location>
</feature>
<feature type="region of interest" description="Disordered" evidence="3">
    <location>
        <begin position="94"/>
        <end position="225"/>
    </location>
</feature>
<feature type="compositionally biased region" description="Low complexity" evidence="3">
    <location>
        <begin position="1"/>
        <end position="23"/>
    </location>
</feature>
<feature type="compositionally biased region" description="Low complexity" evidence="3">
    <location>
        <begin position="31"/>
        <end position="43"/>
    </location>
</feature>
<feature type="compositionally biased region" description="Basic residues" evidence="3">
    <location>
        <begin position="123"/>
        <end position="138"/>
    </location>
</feature>
<feature type="compositionally biased region" description="Basic residues" evidence="3">
    <location>
        <begin position="146"/>
        <end position="163"/>
    </location>
</feature>
<feature type="compositionally biased region" description="Basic residues" evidence="3">
    <location>
        <begin position="171"/>
        <end position="189"/>
    </location>
</feature>
<feature type="compositionally biased region" description="Basic residues" evidence="3">
    <location>
        <begin position="198"/>
        <end position="225"/>
    </location>
</feature>
<feature type="modified residue" description="N-acetylserine" evidence="1">
    <location>
        <position position="2"/>
    </location>
</feature>
<feature type="strand" evidence="4">
    <location>
        <begin position="42"/>
        <end position="44"/>
    </location>
</feature>
<feature type="helix" evidence="4">
    <location>
        <begin position="45"/>
        <end position="55"/>
    </location>
</feature>
<feature type="strand" evidence="4">
    <location>
        <begin position="57"/>
        <end position="60"/>
    </location>
</feature>
<feature type="helix" evidence="4">
    <location>
        <begin position="67"/>
        <end position="69"/>
    </location>
</feature>
<feature type="strand" evidence="4">
    <location>
        <begin position="70"/>
        <end position="75"/>
    </location>
</feature>
<feature type="strand" evidence="4">
    <location>
        <begin position="78"/>
        <end position="81"/>
    </location>
</feature>
<feature type="helix" evidence="4">
    <location>
        <begin position="82"/>
        <end position="88"/>
    </location>
</feature>
<feature type="turn" evidence="4">
    <location>
        <begin position="89"/>
        <end position="91"/>
    </location>
</feature>
<feature type="helix" evidence="4">
    <location>
        <begin position="92"/>
        <end position="95"/>
    </location>
</feature>
<comment type="function">
    <text>Histones H1 are necessary for the condensation of nucleosome chains into higher-order structures.</text>
</comment>
<comment type="subcellular location">
    <subcellularLocation>
        <location>Nucleus</location>
    </subcellularLocation>
    <subcellularLocation>
        <location>Chromosome</location>
    </subcellularLocation>
</comment>
<comment type="similarity">
    <text evidence="2">Belongs to the histone H1/H5 family.</text>
</comment>
<dbReference type="EMBL" id="M17019">
    <property type="protein sequence ID" value="AAA48789.1"/>
    <property type="molecule type" value="Genomic_DNA"/>
</dbReference>
<dbReference type="PIR" id="B28456">
    <property type="entry name" value="B28456"/>
</dbReference>
<dbReference type="RefSeq" id="NP_001035733.1">
    <property type="nucleotide sequence ID" value="NM_001040643.1"/>
</dbReference>
<dbReference type="PDB" id="1GHC">
    <property type="method" value="NMR"/>
    <property type="chains" value="A=41-114"/>
</dbReference>
<dbReference type="PDBsum" id="1GHC"/>
<dbReference type="SMR" id="P08287"/>
<dbReference type="FunCoup" id="P08287">
    <property type="interactions" value="746"/>
</dbReference>
<dbReference type="PaxDb" id="9031-ENSGALP00000037266"/>
<dbReference type="GeneID" id="427892"/>
<dbReference type="KEGG" id="gga:427892"/>
<dbReference type="CTD" id="427892"/>
<dbReference type="VEuPathDB" id="HostDB:geneid_427892"/>
<dbReference type="eggNOG" id="KOG4012">
    <property type="taxonomic scope" value="Eukaryota"/>
</dbReference>
<dbReference type="HOGENOM" id="CLU_052897_7_0_1"/>
<dbReference type="InParanoid" id="P08287"/>
<dbReference type="OMA" id="MAIEPAC"/>
<dbReference type="OrthoDB" id="9634976at2759"/>
<dbReference type="TreeFam" id="TF313664"/>
<dbReference type="CD-CODE" id="9638259C">
    <property type="entry name" value="Euchromatin"/>
</dbReference>
<dbReference type="CD-CODE" id="B19EA3C3">
    <property type="entry name" value="Synthetic Condensate 000214"/>
</dbReference>
<dbReference type="EvolutionaryTrace" id="P08287"/>
<dbReference type="PRO" id="PR:P08287"/>
<dbReference type="Proteomes" id="UP000000539">
    <property type="component" value="Unassembled WGS sequence"/>
</dbReference>
<dbReference type="GO" id="GO:0000786">
    <property type="term" value="C:nucleosome"/>
    <property type="evidence" value="ECO:0007669"/>
    <property type="project" value="InterPro"/>
</dbReference>
<dbReference type="GO" id="GO:0005634">
    <property type="term" value="C:nucleus"/>
    <property type="evidence" value="ECO:0000318"/>
    <property type="project" value="GO_Central"/>
</dbReference>
<dbReference type="GO" id="GO:0003690">
    <property type="term" value="F:double-stranded DNA binding"/>
    <property type="evidence" value="ECO:0000318"/>
    <property type="project" value="GO_Central"/>
</dbReference>
<dbReference type="GO" id="GO:0031492">
    <property type="term" value="F:nucleosomal DNA binding"/>
    <property type="evidence" value="ECO:0000318"/>
    <property type="project" value="GO_Central"/>
</dbReference>
<dbReference type="GO" id="GO:0030527">
    <property type="term" value="F:structural constituent of chromatin"/>
    <property type="evidence" value="ECO:0007669"/>
    <property type="project" value="InterPro"/>
</dbReference>
<dbReference type="GO" id="GO:0030261">
    <property type="term" value="P:chromosome condensation"/>
    <property type="evidence" value="ECO:0000318"/>
    <property type="project" value="GO_Central"/>
</dbReference>
<dbReference type="GO" id="GO:0045910">
    <property type="term" value="P:negative regulation of DNA recombination"/>
    <property type="evidence" value="ECO:0000318"/>
    <property type="project" value="GO_Central"/>
</dbReference>
<dbReference type="GO" id="GO:0006334">
    <property type="term" value="P:nucleosome assembly"/>
    <property type="evidence" value="ECO:0007669"/>
    <property type="project" value="InterPro"/>
</dbReference>
<dbReference type="CDD" id="cd00073">
    <property type="entry name" value="H15"/>
    <property type="match status" value="1"/>
</dbReference>
<dbReference type="FunFam" id="1.10.10.10:FF:000075">
    <property type="entry name" value="Histone H1 like"/>
    <property type="match status" value="1"/>
</dbReference>
<dbReference type="Gene3D" id="1.10.10.10">
    <property type="entry name" value="Winged helix-like DNA-binding domain superfamily/Winged helix DNA-binding domain"/>
    <property type="match status" value="1"/>
</dbReference>
<dbReference type="IDEAL" id="IID50308"/>
<dbReference type="InterPro" id="IPR005819">
    <property type="entry name" value="H1/H5"/>
</dbReference>
<dbReference type="InterPro" id="IPR005818">
    <property type="entry name" value="Histone_H1/H5_H15"/>
</dbReference>
<dbReference type="InterPro" id="IPR036388">
    <property type="entry name" value="WH-like_DNA-bd_sf"/>
</dbReference>
<dbReference type="InterPro" id="IPR036390">
    <property type="entry name" value="WH_DNA-bd_sf"/>
</dbReference>
<dbReference type="Pfam" id="PF00538">
    <property type="entry name" value="Linker_histone"/>
    <property type="match status" value="1"/>
</dbReference>
<dbReference type="PRINTS" id="PR00624">
    <property type="entry name" value="HISTONEH5"/>
</dbReference>
<dbReference type="SMART" id="SM00526">
    <property type="entry name" value="H15"/>
    <property type="match status" value="1"/>
</dbReference>
<dbReference type="SUPFAM" id="SSF46785">
    <property type="entry name" value="Winged helix' DNA-binding domain"/>
    <property type="match status" value="1"/>
</dbReference>
<dbReference type="PROSITE" id="PS51504">
    <property type="entry name" value="H15"/>
    <property type="match status" value="1"/>
</dbReference>